<name>THIQ_ECO57</name>
<comment type="function">
    <text evidence="1">Part of the ABC transporter complex ThiBPQ involved in thiamine import. Responsible for energy coupling to the transport system.</text>
</comment>
<comment type="catalytic activity">
    <reaction evidence="1">
        <text>thiamine(out) + ATP + H2O = thiamine(in) + ADP + phosphate + H(+)</text>
        <dbReference type="Rhea" id="RHEA:29811"/>
        <dbReference type="ChEBI" id="CHEBI:15377"/>
        <dbReference type="ChEBI" id="CHEBI:15378"/>
        <dbReference type="ChEBI" id="CHEBI:18385"/>
        <dbReference type="ChEBI" id="CHEBI:30616"/>
        <dbReference type="ChEBI" id="CHEBI:43474"/>
        <dbReference type="ChEBI" id="CHEBI:456216"/>
        <dbReference type="EC" id="7.6.2.15"/>
    </reaction>
</comment>
<comment type="subunit">
    <text evidence="1">The complex is composed of two ATP-binding proteins (ThiQ), two transmembrane proteins (ThiP) and a solute-binding protein (ThiB).</text>
</comment>
<comment type="subcellular location">
    <subcellularLocation>
        <location evidence="1">Cell inner membrane</location>
        <topology evidence="1">Peripheral membrane protein</topology>
    </subcellularLocation>
</comment>
<comment type="similarity">
    <text evidence="1">Belongs to the ABC transporter superfamily. Thiamine importer (TC 3.A.1.19.1) family.</text>
</comment>
<reference key="1">
    <citation type="journal article" date="2001" name="Nature">
        <title>Genome sequence of enterohaemorrhagic Escherichia coli O157:H7.</title>
        <authorList>
            <person name="Perna N.T."/>
            <person name="Plunkett G. III"/>
            <person name="Burland V."/>
            <person name="Mau B."/>
            <person name="Glasner J.D."/>
            <person name="Rose D.J."/>
            <person name="Mayhew G.F."/>
            <person name="Evans P.S."/>
            <person name="Gregor J."/>
            <person name="Kirkpatrick H.A."/>
            <person name="Posfai G."/>
            <person name="Hackett J."/>
            <person name="Klink S."/>
            <person name="Boutin A."/>
            <person name="Shao Y."/>
            <person name="Miller L."/>
            <person name="Grotbeck E.J."/>
            <person name="Davis N.W."/>
            <person name="Lim A."/>
            <person name="Dimalanta E.T."/>
            <person name="Potamousis K."/>
            <person name="Apodaca J."/>
            <person name="Anantharaman T.S."/>
            <person name="Lin J."/>
            <person name="Yen G."/>
            <person name="Schwartz D.C."/>
            <person name="Welch R.A."/>
            <person name="Blattner F.R."/>
        </authorList>
    </citation>
    <scope>NUCLEOTIDE SEQUENCE [LARGE SCALE GENOMIC DNA]</scope>
    <source>
        <strain>O157:H7 / EDL933 / ATCC 700927 / EHEC</strain>
    </source>
</reference>
<reference key="2">
    <citation type="journal article" date="2001" name="DNA Res.">
        <title>Complete genome sequence of enterohemorrhagic Escherichia coli O157:H7 and genomic comparison with a laboratory strain K-12.</title>
        <authorList>
            <person name="Hayashi T."/>
            <person name="Makino K."/>
            <person name="Ohnishi M."/>
            <person name="Kurokawa K."/>
            <person name="Ishii K."/>
            <person name="Yokoyama K."/>
            <person name="Han C.-G."/>
            <person name="Ohtsubo E."/>
            <person name="Nakayama K."/>
            <person name="Murata T."/>
            <person name="Tanaka M."/>
            <person name="Tobe T."/>
            <person name="Iida T."/>
            <person name="Takami H."/>
            <person name="Honda T."/>
            <person name="Sasakawa C."/>
            <person name="Ogasawara N."/>
            <person name="Yasunaga T."/>
            <person name="Kuhara S."/>
            <person name="Shiba T."/>
            <person name="Hattori M."/>
            <person name="Shinagawa H."/>
        </authorList>
    </citation>
    <scope>NUCLEOTIDE SEQUENCE [LARGE SCALE GENOMIC DNA]</scope>
    <source>
        <strain>O157:H7 / Sakai / RIMD 0509952 / EHEC</strain>
    </source>
</reference>
<accession>Q8XA06</accession>
<accession>Q7AHS0</accession>
<dbReference type="EC" id="7.6.2.15" evidence="1"/>
<dbReference type="EMBL" id="AE005174">
    <property type="protein sequence ID" value="AAG54370.1"/>
    <property type="molecule type" value="Genomic_DNA"/>
</dbReference>
<dbReference type="EMBL" id="BA000007">
    <property type="protein sequence ID" value="BAB33493.1"/>
    <property type="molecule type" value="Genomic_DNA"/>
</dbReference>
<dbReference type="PIR" id="F85488">
    <property type="entry name" value="F85488"/>
</dbReference>
<dbReference type="PIR" id="F90637">
    <property type="entry name" value="F90637"/>
</dbReference>
<dbReference type="RefSeq" id="NP_308097.1">
    <property type="nucleotide sequence ID" value="NC_002695.1"/>
</dbReference>
<dbReference type="RefSeq" id="WP_000916267.1">
    <property type="nucleotide sequence ID" value="NZ_VOAI01000002.1"/>
</dbReference>
<dbReference type="SMR" id="Q8XA06"/>
<dbReference type="STRING" id="155864.Z0075"/>
<dbReference type="GeneID" id="913478"/>
<dbReference type="KEGG" id="ece:Z0075"/>
<dbReference type="KEGG" id="ecs:ECs_0070"/>
<dbReference type="PATRIC" id="fig|386585.9.peg.170"/>
<dbReference type="eggNOG" id="COG3840">
    <property type="taxonomic scope" value="Bacteria"/>
</dbReference>
<dbReference type="HOGENOM" id="CLU_000604_1_22_6"/>
<dbReference type="OMA" id="QQGFIFQ"/>
<dbReference type="Proteomes" id="UP000000558">
    <property type="component" value="Chromosome"/>
</dbReference>
<dbReference type="Proteomes" id="UP000002519">
    <property type="component" value="Chromosome"/>
</dbReference>
<dbReference type="GO" id="GO:0005886">
    <property type="term" value="C:plasma membrane"/>
    <property type="evidence" value="ECO:0007669"/>
    <property type="project" value="UniProtKB-SubCell"/>
</dbReference>
<dbReference type="GO" id="GO:0048502">
    <property type="term" value="F:ABC-type thiamine transporter activity"/>
    <property type="evidence" value="ECO:0007669"/>
    <property type="project" value="UniProtKB-EC"/>
</dbReference>
<dbReference type="GO" id="GO:0005524">
    <property type="term" value="F:ATP binding"/>
    <property type="evidence" value="ECO:0007669"/>
    <property type="project" value="UniProtKB-KW"/>
</dbReference>
<dbReference type="GO" id="GO:0016887">
    <property type="term" value="F:ATP hydrolysis activity"/>
    <property type="evidence" value="ECO:0007669"/>
    <property type="project" value="InterPro"/>
</dbReference>
<dbReference type="CDD" id="cd03298">
    <property type="entry name" value="ABC_ThiQ_thiamine_transporter"/>
    <property type="match status" value="1"/>
</dbReference>
<dbReference type="FunFam" id="3.40.50.300:FF:001071">
    <property type="entry name" value="Thiamine import ATP-binding protein ThiQ"/>
    <property type="match status" value="1"/>
</dbReference>
<dbReference type="Gene3D" id="3.40.50.300">
    <property type="entry name" value="P-loop containing nucleotide triphosphate hydrolases"/>
    <property type="match status" value="1"/>
</dbReference>
<dbReference type="InterPro" id="IPR003593">
    <property type="entry name" value="AAA+_ATPase"/>
</dbReference>
<dbReference type="InterPro" id="IPR050093">
    <property type="entry name" value="ABC_SmlMolc_Importer"/>
</dbReference>
<dbReference type="InterPro" id="IPR003439">
    <property type="entry name" value="ABC_transporter-like_ATP-bd"/>
</dbReference>
<dbReference type="InterPro" id="IPR017871">
    <property type="entry name" value="ABC_transporter-like_CS"/>
</dbReference>
<dbReference type="InterPro" id="IPR027417">
    <property type="entry name" value="P-loop_NTPase"/>
</dbReference>
<dbReference type="InterPro" id="IPR005968">
    <property type="entry name" value="Thiamine_ABC_ThiQ"/>
</dbReference>
<dbReference type="NCBIfam" id="NF008039">
    <property type="entry name" value="PRK10771.1"/>
    <property type="match status" value="1"/>
</dbReference>
<dbReference type="NCBIfam" id="TIGR01277">
    <property type="entry name" value="thiQ"/>
    <property type="match status" value="1"/>
</dbReference>
<dbReference type="PANTHER" id="PTHR42781">
    <property type="entry name" value="SPERMIDINE/PUTRESCINE IMPORT ATP-BINDING PROTEIN POTA"/>
    <property type="match status" value="1"/>
</dbReference>
<dbReference type="PANTHER" id="PTHR42781:SF1">
    <property type="entry name" value="THIAMINE IMPORT ATP-BINDING PROTEIN THIQ"/>
    <property type="match status" value="1"/>
</dbReference>
<dbReference type="Pfam" id="PF00005">
    <property type="entry name" value="ABC_tran"/>
    <property type="match status" value="1"/>
</dbReference>
<dbReference type="SMART" id="SM00382">
    <property type="entry name" value="AAA"/>
    <property type="match status" value="1"/>
</dbReference>
<dbReference type="SUPFAM" id="SSF52540">
    <property type="entry name" value="P-loop containing nucleoside triphosphate hydrolases"/>
    <property type="match status" value="1"/>
</dbReference>
<dbReference type="PROSITE" id="PS00211">
    <property type="entry name" value="ABC_TRANSPORTER_1"/>
    <property type="match status" value="1"/>
</dbReference>
<dbReference type="PROSITE" id="PS50893">
    <property type="entry name" value="ABC_TRANSPORTER_2"/>
    <property type="match status" value="1"/>
</dbReference>
<dbReference type="PROSITE" id="PS51288">
    <property type="entry name" value="THIQ"/>
    <property type="match status" value="1"/>
</dbReference>
<sequence>MLKLTDITWLYHHLPMRFSLTVERGEQVAILGPSGAGKSTLLNLIAGFLTPASGALTIDGVDHTTTPPSRRPVSMLFQENNLFSHLTVAQNIGLGLNPGLKLNAVQQEKMHAIARQMGIDNLMARLPGELSGGQRQRVALARCLVREQPILLLDEPFSALDPALRQEMLTLVSTSCQQQKMTLLMVSHSVEDAARIATRSVVVADGRIAWQGMTNELLSGKASASALLGITG</sequence>
<keyword id="KW-0067">ATP-binding</keyword>
<keyword id="KW-0997">Cell inner membrane</keyword>
<keyword id="KW-1003">Cell membrane</keyword>
<keyword id="KW-0472">Membrane</keyword>
<keyword id="KW-0547">Nucleotide-binding</keyword>
<keyword id="KW-1185">Reference proteome</keyword>
<keyword id="KW-1278">Translocase</keyword>
<keyword id="KW-0813">Transport</keyword>
<proteinExistence type="inferred from homology"/>
<organism>
    <name type="scientific">Escherichia coli O157:H7</name>
    <dbReference type="NCBI Taxonomy" id="83334"/>
    <lineage>
        <taxon>Bacteria</taxon>
        <taxon>Pseudomonadati</taxon>
        <taxon>Pseudomonadota</taxon>
        <taxon>Gammaproteobacteria</taxon>
        <taxon>Enterobacterales</taxon>
        <taxon>Enterobacteriaceae</taxon>
        <taxon>Escherichia</taxon>
    </lineage>
</organism>
<protein>
    <recommendedName>
        <fullName evidence="1">Thiamine import ATP-binding protein ThiQ</fullName>
        <ecNumber evidence="1">7.6.2.15</ecNumber>
    </recommendedName>
</protein>
<gene>
    <name evidence="1" type="primary">thiQ</name>
    <name type="ordered locus">Z0075</name>
    <name type="ordered locus">ECs0070</name>
</gene>
<evidence type="ECO:0000255" key="1">
    <source>
        <dbReference type="HAMAP-Rule" id="MF_01723"/>
    </source>
</evidence>
<feature type="chain" id="PRO_0000274439" description="Thiamine import ATP-binding protein ThiQ">
    <location>
        <begin position="1"/>
        <end position="232"/>
    </location>
</feature>
<feature type="domain" description="ABC transporter" evidence="1">
    <location>
        <begin position="2"/>
        <end position="230"/>
    </location>
</feature>
<feature type="binding site" evidence="1">
    <location>
        <begin position="32"/>
        <end position="39"/>
    </location>
    <ligand>
        <name>ATP</name>
        <dbReference type="ChEBI" id="CHEBI:30616"/>
    </ligand>
</feature>